<evidence type="ECO:0000250" key="1">
    <source>
        <dbReference type="UniProtKB" id="P00918"/>
    </source>
</evidence>
<evidence type="ECO:0000255" key="2"/>
<evidence type="ECO:0000255" key="3">
    <source>
        <dbReference type="PROSITE-ProRule" id="PRU01134"/>
    </source>
</evidence>
<evidence type="ECO:0000269" key="4">
    <source>
    </source>
</evidence>
<evidence type="ECO:0000269" key="5">
    <source>
    </source>
</evidence>
<evidence type="ECO:0000269" key="6">
    <source>
    </source>
</evidence>
<evidence type="ECO:0000269" key="7">
    <source>
    </source>
</evidence>
<evidence type="ECO:0000269" key="8">
    <source>
    </source>
</evidence>
<evidence type="ECO:0000269" key="9">
    <source>
    </source>
</evidence>
<evidence type="ECO:0000269" key="10">
    <source>
    </source>
</evidence>
<evidence type="ECO:0000269" key="11">
    <source>
    </source>
</evidence>
<evidence type="ECO:0000269" key="12">
    <source>
    </source>
</evidence>
<evidence type="ECO:0000269" key="13">
    <source>
    </source>
</evidence>
<evidence type="ECO:0000303" key="14">
    <source>
    </source>
</evidence>
<evidence type="ECO:0000303" key="15">
    <source ref="3"/>
</evidence>
<evidence type="ECO:0000305" key="16"/>
<evidence type="ECO:0000312" key="17">
    <source>
        <dbReference type="HGNC" id="HGNC:1371"/>
    </source>
</evidence>
<evidence type="ECO:0007829" key="18">
    <source>
        <dbReference type="PDB" id="4Q0L"/>
    </source>
</evidence>
<evidence type="ECO:0007829" key="19">
    <source>
        <dbReference type="PDB" id="5MSA"/>
    </source>
</evidence>
<reference key="1">
    <citation type="journal article" date="1998" name="Proc. Natl. Acad. Sci. U.S.A.">
        <title>Human carbonic anhydrase XII: cDNA cloning, expression, and chromosomal localization of a carbonic anhydrase gene that is overexpressed in some renal cell cancers.</title>
        <authorList>
            <person name="Tuereci O."/>
            <person name="Sahin U."/>
            <person name="Vollmar E."/>
            <person name="Siemer S."/>
            <person name="Goettert E."/>
            <person name="Seitz G."/>
            <person name="Parkkila A.-K."/>
            <person name="Shah G.N."/>
            <person name="Grubb J.H."/>
            <person name="Pfreundschuh M."/>
            <person name="Sly W.S."/>
        </authorList>
    </citation>
    <scope>NUCLEOTIDE SEQUENCE [MRNA] (ISOFORM 1)</scope>
    <scope>CHARACTERIZATION</scope>
    <source>
        <tissue>Renal cell carcinoma</tissue>
    </source>
</reference>
<reference key="2">
    <citation type="journal article" date="1998" name="Proc. Natl. Acad. Sci. U.S.A.">
        <title>Down-regulation of transmembrane carbonic anhydrases in renal cell carcinoma cell lines by wild-type von Hippel-Lindau transgenes.</title>
        <authorList>
            <person name="Ivanov S.V."/>
            <person name="Kuzmin I."/>
            <person name="Wei M.-H."/>
            <person name="Pack S."/>
            <person name="Geil L."/>
            <person name="Johnson B.E."/>
            <person name="Stanbridge E.J."/>
            <person name="Lerman M.I."/>
        </authorList>
    </citation>
    <scope>NUCLEOTIDE SEQUENCE [MRNA] (ISOFORM 1)</scope>
    <source>
        <tissue>Lung</tissue>
    </source>
</reference>
<reference key="3">
    <citation type="submission" date="2003-05" db="EMBL/GenBank/DDBJ databases">
        <title>Cloning of human full-length CDSs in BD Creator(TM) system donor vector.</title>
        <authorList>
            <person name="Kalnine N."/>
            <person name="Chen X."/>
            <person name="Rolfs A."/>
            <person name="Halleck A."/>
            <person name="Hines L."/>
            <person name="Eisenstein S."/>
            <person name="Koundinya M."/>
            <person name="Raphael J."/>
            <person name="Moreira D."/>
            <person name="Kelley T."/>
            <person name="LaBaer J."/>
            <person name="Lin Y."/>
            <person name="Phelan M."/>
            <person name="Farmer A."/>
        </authorList>
    </citation>
    <scope>NUCLEOTIDE SEQUENCE [LARGE SCALE MRNA] (ISOFORM 2)</scope>
</reference>
<reference key="4">
    <citation type="journal article" date="2004" name="Nat. Genet.">
        <title>Complete sequencing and characterization of 21,243 full-length human cDNAs.</title>
        <authorList>
            <person name="Ota T."/>
            <person name="Suzuki Y."/>
            <person name="Nishikawa T."/>
            <person name="Otsuki T."/>
            <person name="Sugiyama T."/>
            <person name="Irie R."/>
            <person name="Wakamatsu A."/>
            <person name="Hayashi K."/>
            <person name="Sato H."/>
            <person name="Nagai K."/>
            <person name="Kimura K."/>
            <person name="Makita H."/>
            <person name="Sekine M."/>
            <person name="Obayashi M."/>
            <person name="Nishi T."/>
            <person name="Shibahara T."/>
            <person name="Tanaka T."/>
            <person name="Ishii S."/>
            <person name="Yamamoto J."/>
            <person name="Saito K."/>
            <person name="Kawai Y."/>
            <person name="Isono Y."/>
            <person name="Nakamura Y."/>
            <person name="Nagahari K."/>
            <person name="Murakami K."/>
            <person name="Yasuda T."/>
            <person name="Iwayanagi T."/>
            <person name="Wagatsuma M."/>
            <person name="Shiratori A."/>
            <person name="Sudo H."/>
            <person name="Hosoiri T."/>
            <person name="Kaku Y."/>
            <person name="Kodaira H."/>
            <person name="Kondo H."/>
            <person name="Sugawara M."/>
            <person name="Takahashi M."/>
            <person name="Kanda K."/>
            <person name="Yokoi T."/>
            <person name="Furuya T."/>
            <person name="Kikkawa E."/>
            <person name="Omura Y."/>
            <person name="Abe K."/>
            <person name="Kamihara K."/>
            <person name="Katsuta N."/>
            <person name="Sato K."/>
            <person name="Tanikawa M."/>
            <person name="Yamazaki M."/>
            <person name="Ninomiya K."/>
            <person name="Ishibashi T."/>
            <person name="Yamashita H."/>
            <person name="Murakawa K."/>
            <person name="Fujimori K."/>
            <person name="Tanai H."/>
            <person name="Kimata M."/>
            <person name="Watanabe M."/>
            <person name="Hiraoka S."/>
            <person name="Chiba Y."/>
            <person name="Ishida S."/>
            <person name="Ono Y."/>
            <person name="Takiguchi S."/>
            <person name="Watanabe S."/>
            <person name="Yosida M."/>
            <person name="Hotuta T."/>
            <person name="Kusano J."/>
            <person name="Kanehori K."/>
            <person name="Takahashi-Fujii A."/>
            <person name="Hara H."/>
            <person name="Tanase T.-O."/>
            <person name="Nomura Y."/>
            <person name="Togiya S."/>
            <person name="Komai F."/>
            <person name="Hara R."/>
            <person name="Takeuchi K."/>
            <person name="Arita M."/>
            <person name="Imose N."/>
            <person name="Musashino K."/>
            <person name="Yuuki H."/>
            <person name="Oshima A."/>
            <person name="Sasaki N."/>
            <person name="Aotsuka S."/>
            <person name="Yoshikawa Y."/>
            <person name="Matsunawa H."/>
            <person name="Ichihara T."/>
            <person name="Shiohata N."/>
            <person name="Sano S."/>
            <person name="Moriya S."/>
            <person name="Momiyama H."/>
            <person name="Satoh N."/>
            <person name="Takami S."/>
            <person name="Terashima Y."/>
            <person name="Suzuki O."/>
            <person name="Nakagawa S."/>
            <person name="Senoh A."/>
            <person name="Mizoguchi H."/>
            <person name="Goto Y."/>
            <person name="Shimizu F."/>
            <person name="Wakebe H."/>
            <person name="Hishigaki H."/>
            <person name="Watanabe T."/>
            <person name="Sugiyama A."/>
            <person name="Takemoto M."/>
            <person name="Kawakami B."/>
            <person name="Yamazaki M."/>
            <person name="Watanabe K."/>
            <person name="Kumagai A."/>
            <person name="Itakura S."/>
            <person name="Fukuzumi Y."/>
            <person name="Fujimori Y."/>
            <person name="Komiyama M."/>
            <person name="Tashiro H."/>
            <person name="Tanigami A."/>
            <person name="Fujiwara T."/>
            <person name="Ono T."/>
            <person name="Yamada K."/>
            <person name="Fujii Y."/>
            <person name="Ozaki K."/>
            <person name="Hirao M."/>
            <person name="Ohmori Y."/>
            <person name="Kawabata A."/>
            <person name="Hikiji T."/>
            <person name="Kobatake N."/>
            <person name="Inagaki H."/>
            <person name="Ikema Y."/>
            <person name="Okamoto S."/>
            <person name="Okitani R."/>
            <person name="Kawakami T."/>
            <person name="Noguchi S."/>
            <person name="Itoh T."/>
            <person name="Shigeta K."/>
            <person name="Senba T."/>
            <person name="Matsumura K."/>
            <person name="Nakajima Y."/>
            <person name="Mizuno T."/>
            <person name="Morinaga M."/>
            <person name="Sasaki M."/>
            <person name="Togashi T."/>
            <person name="Oyama M."/>
            <person name="Hata H."/>
            <person name="Watanabe M."/>
            <person name="Komatsu T."/>
            <person name="Mizushima-Sugano J."/>
            <person name="Satoh T."/>
            <person name="Shirai Y."/>
            <person name="Takahashi Y."/>
            <person name="Nakagawa K."/>
            <person name="Okumura K."/>
            <person name="Nagase T."/>
            <person name="Nomura N."/>
            <person name="Kikuchi H."/>
            <person name="Masuho Y."/>
            <person name="Yamashita R."/>
            <person name="Nakai K."/>
            <person name="Yada T."/>
            <person name="Nakamura Y."/>
            <person name="Ohara O."/>
            <person name="Isogai T."/>
            <person name="Sugano S."/>
        </authorList>
    </citation>
    <scope>NUCLEOTIDE SEQUENCE [LARGE SCALE MRNA] (ISOFORM 1)</scope>
    <source>
        <tissue>Trachea</tissue>
    </source>
</reference>
<reference key="5">
    <citation type="journal article" date="2004" name="Genome Res.">
        <title>The status, quality, and expansion of the NIH full-length cDNA project: the Mammalian Gene Collection (MGC).</title>
        <authorList>
            <consortium name="The MGC Project Team"/>
        </authorList>
    </citation>
    <scope>NUCLEOTIDE SEQUENCE [LARGE SCALE MRNA] (ISOFORMS 1 AND 2)</scope>
    <source>
        <tissue>Eye</tissue>
        <tissue>Kidney</tissue>
    </source>
</reference>
<reference key="6">
    <citation type="journal article" date="2007" name="Angew. Chem. Int. Ed. Engl.">
        <title>Saccharin inhibits carbonic anhydrases: possible explanation for its unpleasant metallic aftertaste.</title>
        <authorList>
            <person name="Koehler K."/>
            <person name="Hillebrecht A."/>
            <person name="Schulze Wischeler J."/>
            <person name="Innocenti A."/>
            <person name="Heine A."/>
            <person name="Supuran C.T."/>
            <person name="Klebe G."/>
        </authorList>
    </citation>
    <scope>ACTIVITY REGULATION</scope>
</reference>
<reference key="7">
    <citation type="journal article" date="2007" name="Bioorg. Med. Chem. Lett.">
        <title>Phosph(on)ate as a zinc-binding group in metalloenzyme inhibitors: X-ray crystal structure of the antiviral drug foscarnet complexed to human carbonic anhydrase I.</title>
        <authorList>
            <person name="Temperini C."/>
            <person name="Innocenti A."/>
            <person name="Guerri A."/>
            <person name="Scozzafava A."/>
            <person name="Rusconi S."/>
            <person name="Supuran C.T."/>
        </authorList>
    </citation>
    <scope>ACTIVITY REGULATION</scope>
</reference>
<reference key="8">
    <citation type="journal article" date="2007" name="J. Am. Chem. Soc.">
        <title>Structural analysis of charge discrimination in the binding of inhibitors to human carbonic anhydrases I and II.</title>
        <authorList>
            <person name="Srivastava D.K."/>
            <person name="Jude K.M."/>
            <person name="Banerjee A.L."/>
            <person name="Haldar M."/>
            <person name="Manokaran S."/>
            <person name="Kooren J."/>
            <person name="Mallik S."/>
            <person name="Christianson D.W."/>
        </authorList>
    </citation>
    <scope>ACTIVITY REGULATION</scope>
</reference>
<reference key="9">
    <citation type="journal article" date="2009" name="Bioorg. Med. Chem. Lett.">
        <title>A thiabendazole sulfonamide shows potent inhibitory activity against mammalian and nematode alpha-carbonic anhydrases.</title>
        <authorList>
            <person name="Crocetti L."/>
            <person name="Maresca A."/>
            <person name="Temperini C."/>
            <person name="Hall R.A."/>
            <person name="Scozzafava A."/>
            <person name="Muehlschlegel F.A."/>
            <person name="Supuran C.T."/>
        </authorList>
    </citation>
    <scope>ACTIVITY REGULATION</scope>
</reference>
<reference key="10">
    <citation type="journal article" date="2009" name="J. Am. Chem. Soc.">
        <title>Non-zinc mediated inhibition of carbonic anhydrases: coumarins are a new class of suicide inhibitors.</title>
        <authorList>
            <person name="Maresca A."/>
            <person name="Temperini C."/>
            <person name="Vu H."/>
            <person name="Pham N.B."/>
            <person name="Poulsen S.-A."/>
            <person name="Scozzafava A."/>
            <person name="Quinn R.J."/>
            <person name="Supuran C.T."/>
        </authorList>
    </citation>
    <scope>ACTIVITY REGULATION</scope>
</reference>
<reference key="11">
    <citation type="journal article" date="2009" name="Proteins">
        <title>Crystal structure of human carbonic anhydrase XIII and its complex with the inhibitor acetazolamide.</title>
        <authorList>
            <person name="Di Fiore A."/>
            <person name="Monti S.M."/>
            <person name="Hilvo M."/>
            <person name="Parkkila S."/>
            <person name="Romano V."/>
            <person name="Scaloni A."/>
            <person name="Pedone C."/>
            <person name="Scozzafava A."/>
            <person name="Supuran C.T."/>
            <person name="De Simone G."/>
        </authorList>
    </citation>
    <scope>BIOPHYSICOCHEMICAL PROPERTIES</scope>
    <scope>ACTIVITY REGULATION</scope>
</reference>
<reference key="12">
    <citation type="journal article" date="2016" name="Hum. Mol. Genet.">
        <title>Loss of carbonic anhydrase XII function in individuals with elevated sweat chloride concentration and pulmonary airway disease.</title>
        <authorList>
            <person name="Lee M."/>
            <person name="Vecchio-Pagan B."/>
            <person name="Sharma N."/>
            <person name="Waheed A."/>
            <person name="Li X."/>
            <person name="Raraigh K.S."/>
            <person name="Robbins S."/>
            <person name="Han S.T."/>
            <person name="Franca A.L."/>
            <person name="Pellicore M.J."/>
            <person name="Evans T.A."/>
            <person name="Arcara K.M."/>
            <person name="Nguyen H."/>
            <person name="Luan S."/>
            <person name="Belchis D."/>
            <person name="Hertecant J."/>
            <person name="Zabner J."/>
            <person name="Sly W.S."/>
            <person name="Cutting G.R."/>
        </authorList>
    </citation>
    <scope>FUNCTION</scope>
    <scope>CATALYTIC ACTIVITY</scope>
    <scope>TISSUE SPECIFICITY</scope>
    <scope>SUBCELLULAR LOCATION</scope>
    <scope>VARIANT HYCHL GLN-121</scope>
    <scope>CHARACTERIZATION OF VARIANTS HYCHL GLN-121 AND LYS-143</scope>
</reference>
<reference key="13">
    <citation type="journal article" date="2001" name="Proc. Natl. Acad. Sci. U.S.A.">
        <title>Crystal structure of the dimeric extracellular domain of human carbonic anhydrase XII, a bitopic membrane protein overexpressed in certain cancer tumor cells.</title>
        <authorList>
            <person name="Whittington D.A."/>
            <person name="Waheed A."/>
            <person name="Ulmasov B."/>
            <person name="Shah G.N."/>
            <person name="Grubb J.H."/>
            <person name="Sly W.S."/>
            <person name="Christianson D.W."/>
        </authorList>
    </citation>
    <scope>X-RAY CRYSTALLOGRAPHY (1.50 ANGSTROMS) OF 30-291 IN COMPLEX WITH ZINC ION AND THE INHIBITOR ACETAZOLAMIDE</scope>
    <scope>DISULFIDE BOND</scope>
    <scope>SUBUNIT</scope>
</reference>
<reference key="14">
    <citation type="journal article" date="2010" name="Am. J. Hum. Genet.">
        <title>Hyperchlorhidrosis caused by homozygous mutation in CA12, encoding carbonic anhydrase XII.</title>
        <authorList>
            <person name="Feldshtein M."/>
            <person name="Elkrinawi S."/>
            <person name="Yerushalmi B."/>
            <person name="Marcus B."/>
            <person name="Vullo D."/>
            <person name="Romi H."/>
            <person name="Ofir R."/>
            <person name="Landau D."/>
            <person name="Sivan S."/>
            <person name="Supuran C.T."/>
            <person name="Birk O.S."/>
        </authorList>
    </citation>
    <scope>VARIANT HYCHL LYS-143</scope>
    <scope>INVOLVEMENT IN HYCHL</scope>
    <scope>BIOPHYSICOCHEMICAL PROPERTIES</scope>
</reference>
<reference key="15">
    <citation type="journal article" date="2011" name="Hum. Genet.">
        <title>Autosomal recessive hyponatremia due to isolated salt wasting in sweat associated with a mutation in the active site of carbonic cnhydrase 12.</title>
        <authorList>
            <person name="Muhammad E."/>
            <person name="Leventhal N."/>
            <person name="Parvari G."/>
            <person name="Hanukoglu A."/>
            <person name="Hanukoglu I."/>
            <person name="Chalifa-Caspi V."/>
            <person name="Feinstein Y."/>
            <person name="Weinbrand J."/>
            <person name="Jacoby H."/>
            <person name="Manor E."/>
            <person name="Nagar T."/>
            <person name="Beck J.C."/>
            <person name="Sheffield V.C."/>
            <person name="Hershkovitz E."/>
            <person name="Parvari R."/>
        </authorList>
    </citation>
    <scope>VARIANT HYCHL LYS-143</scope>
</reference>
<comment type="function">
    <text evidence="13">Reversible hydration of carbon dioxide.</text>
</comment>
<comment type="catalytic activity">
    <reaction evidence="13">
        <text>hydrogencarbonate + H(+) = CO2 + H2O</text>
        <dbReference type="Rhea" id="RHEA:10748"/>
        <dbReference type="ChEBI" id="CHEBI:15377"/>
        <dbReference type="ChEBI" id="CHEBI:15378"/>
        <dbReference type="ChEBI" id="CHEBI:16526"/>
        <dbReference type="ChEBI" id="CHEBI:17544"/>
        <dbReference type="EC" id="4.2.1.1"/>
    </reaction>
</comment>
<comment type="cofactor">
    <cofactor evidence="4">
        <name>Zn(2+)</name>
        <dbReference type="ChEBI" id="CHEBI:29105"/>
    </cofactor>
</comment>
<comment type="activity regulation">
    <text evidence="5 6 7 8 9 10">Inhibited by coumarins, saccharin, sulfonamide derivatives such as acetazolamide (AZA), benzenesulfonamide and derivatives (4-carboxyethylbenzene-sulfonamide, 4-carboxyethylbenzene-sulfonamide ethyl ester, 4-(acetyl-2-aminoethyl)benzene-sulfonamide, 4-aminoethylbenzene-sulfonamide) and Foscarnet (phosphonoformate trisodium salt).</text>
</comment>
<comment type="biophysicochemical properties">
    <kinetics>
        <KM evidence="8 11">12 mM for CO(2)</KM>
    </kinetics>
</comment>
<comment type="subunit">
    <text evidence="4">Homodimer.</text>
</comment>
<comment type="subcellular location">
    <subcellularLocation>
        <location>Membrane</location>
        <topology>Single-pass type I membrane protein</topology>
    </subcellularLocation>
    <subcellularLocation>
        <location evidence="13">Cell membrane</location>
    </subcellularLocation>
</comment>
<comment type="alternative products">
    <event type="alternative splicing"/>
    <isoform>
        <id>O43570-1</id>
        <name>1</name>
        <sequence type="displayed"/>
    </isoform>
    <isoform>
        <id>O43570-2</id>
        <name>2</name>
        <sequence type="described" ref="VSP_000772"/>
    </isoform>
</comment>
<comment type="tissue specificity">
    <text evidence="13">Highly expressed in colon, kidney, prostate, intestine and activated lymphocytes. Expressed at much higher levels in the renal cell cancers than in surrounding normal kidney tissue. Moderately expressed in pancreas, ovary and testis. Expressed in sweat glands and bronchiolar epithelium (PubMed:26911677).</text>
</comment>
<comment type="disease" evidence="11 12 13">
    <disease id="DI-03013">
        <name>Hyperchlorhidrosis, isolated</name>
        <acronym>HYCHL</acronym>
        <description>An autosomal recessive disorder characterized by excessive sweating and increased sweat chloride levels. Affected individuals suffer from episodes of hyponatremic dehydration and report increased amounts of visible salt precipitates in sweat.</description>
        <dbReference type="MIM" id="143860"/>
    </disease>
    <text>The disease is caused by variants affecting the gene represented in this entry.</text>
</comment>
<comment type="similarity">
    <text evidence="16">Belongs to the alpha-carbonic anhydrase family.</text>
</comment>
<organism>
    <name type="scientific">Homo sapiens</name>
    <name type="common">Human</name>
    <dbReference type="NCBI Taxonomy" id="9606"/>
    <lineage>
        <taxon>Eukaryota</taxon>
        <taxon>Metazoa</taxon>
        <taxon>Chordata</taxon>
        <taxon>Craniata</taxon>
        <taxon>Vertebrata</taxon>
        <taxon>Euteleostomi</taxon>
        <taxon>Mammalia</taxon>
        <taxon>Eutheria</taxon>
        <taxon>Euarchontoglires</taxon>
        <taxon>Primates</taxon>
        <taxon>Haplorrhini</taxon>
        <taxon>Catarrhini</taxon>
        <taxon>Hominidae</taxon>
        <taxon>Homo</taxon>
    </lineage>
</organism>
<gene>
    <name evidence="17" type="primary">CA12</name>
</gene>
<feature type="signal peptide" evidence="2">
    <location>
        <begin position="1"/>
        <end position="24"/>
    </location>
</feature>
<feature type="chain" id="PRO_0000004248" description="Carbonic anhydrase 12">
    <location>
        <begin position="25"/>
        <end position="354"/>
    </location>
</feature>
<feature type="topological domain" description="Extracellular" evidence="2">
    <location>
        <begin position="25"/>
        <end position="301"/>
    </location>
</feature>
<feature type="transmembrane region" description="Helical" evidence="2">
    <location>
        <begin position="302"/>
        <end position="322"/>
    </location>
</feature>
<feature type="topological domain" description="Cytoplasmic" evidence="2">
    <location>
        <begin position="323"/>
        <end position="354"/>
    </location>
</feature>
<feature type="domain" description="Alpha-carbonic anhydrase" evidence="3">
    <location>
        <begin position="30"/>
        <end position="289"/>
    </location>
</feature>
<feature type="active site" description="Proton donor/acceptor" evidence="1">
    <location>
        <position position="94"/>
    </location>
</feature>
<feature type="binding site" evidence="4">
    <location>
        <position position="119"/>
    </location>
    <ligand>
        <name>Zn(2+)</name>
        <dbReference type="ChEBI" id="CHEBI:29105"/>
        <note>catalytic</note>
    </ligand>
</feature>
<feature type="binding site" evidence="4">
    <location>
        <position position="121"/>
    </location>
    <ligand>
        <name>Zn(2+)</name>
        <dbReference type="ChEBI" id="CHEBI:29105"/>
        <note>catalytic</note>
    </ligand>
</feature>
<feature type="binding site" evidence="4">
    <location>
        <position position="145"/>
    </location>
    <ligand>
        <name>Zn(2+)</name>
        <dbReference type="ChEBI" id="CHEBI:29105"/>
        <note>catalytic</note>
    </ligand>
</feature>
<feature type="binding site" evidence="1">
    <location>
        <begin position="226"/>
        <end position="227"/>
    </location>
    <ligand>
        <name>substrate</name>
    </ligand>
</feature>
<feature type="glycosylation site" description="N-linked (GlcNAc...) asparagine" evidence="2">
    <location>
        <position position="28"/>
    </location>
</feature>
<feature type="glycosylation site" description="N-linked (GlcNAc...) asparagine" evidence="2">
    <location>
        <position position="80"/>
    </location>
</feature>
<feature type="glycosylation site" description="N-linked (GlcNAc...) asparagine" evidence="2">
    <location>
        <position position="162"/>
    </location>
</feature>
<feature type="disulfide bond" evidence="4">
    <location>
        <begin position="50"/>
        <end position="230"/>
    </location>
</feature>
<feature type="splice variant" id="VSP_000772" description="In isoform 2." evidence="14 15">
    <location>
        <begin position="292"/>
        <end position="302"/>
    </location>
</feature>
<feature type="sequence variant" id="VAR_081182" description="In HYCHL; severe decrease of activity in the presence of physiological NaCl concentrations; no effect on localization to cell membrane; dbSNP:rs775067652." evidence="13">
    <original>H</original>
    <variation>Q</variation>
    <location>
        <position position="121"/>
    </location>
</feature>
<feature type="sequence variant" id="VAR_065292" description="In HYCHL; severe decrease of activity in the presence of physiological NaCl concentrations; mutant enzyme is highly inhibited by acetazolamide and shows higher sensitivity to inhibition by anions compared to wild-type; the mutation affects the chloride-mediated negative feedback regulation of the enzyme leading to excessive chloride secretion in sweat; no effect on localization to cell membrane; dbSNP:rs267606694." evidence="11 12 13">
    <original>E</original>
    <variation>K</variation>
    <location>
        <position position="143"/>
    </location>
</feature>
<feature type="sequence conflict" description="In Ref. 4; BAG38121." evidence="16" ref="4">
    <original>I</original>
    <variation>T</variation>
    <location>
        <position position="305"/>
    </location>
</feature>
<feature type="helix" evidence="19">
    <location>
        <begin position="36"/>
        <end position="38"/>
    </location>
</feature>
<feature type="helix" evidence="19">
    <location>
        <begin position="40"/>
        <end position="45"/>
    </location>
</feature>
<feature type="helix" evidence="19">
    <location>
        <begin position="48"/>
        <end position="51"/>
    </location>
</feature>
<feature type="strand" evidence="19">
    <location>
        <begin position="52"/>
        <end position="54"/>
    </location>
</feature>
<feature type="helix" evidence="19">
    <location>
        <begin position="62"/>
        <end position="64"/>
    </location>
</feature>
<feature type="strand" evidence="19">
    <location>
        <begin position="65"/>
        <end position="67"/>
    </location>
</feature>
<feature type="strand" evidence="19">
    <location>
        <begin position="75"/>
        <end position="78"/>
    </location>
</feature>
<feature type="strand" evidence="19">
    <location>
        <begin position="85"/>
        <end position="91"/>
    </location>
</feature>
<feature type="strand" evidence="19">
    <location>
        <begin position="93"/>
        <end position="99"/>
    </location>
</feature>
<feature type="strand" evidence="19">
    <location>
        <begin position="105"/>
        <end position="111"/>
    </location>
</feature>
<feature type="strand" evidence="19">
    <location>
        <begin position="113"/>
        <end position="122"/>
    </location>
</feature>
<feature type="strand" evidence="19">
    <location>
        <begin position="132"/>
        <end position="135"/>
    </location>
</feature>
<feature type="strand" evidence="19">
    <location>
        <begin position="141"/>
        <end position="150"/>
    </location>
</feature>
<feature type="turn" evidence="19">
    <location>
        <begin position="151"/>
        <end position="153"/>
    </location>
</feature>
<feature type="helix" evidence="19">
    <location>
        <begin position="157"/>
        <end position="160"/>
    </location>
</feature>
<feature type="strand" evidence="19">
    <location>
        <begin position="167"/>
        <end position="176"/>
    </location>
</feature>
<feature type="helix" evidence="19">
    <location>
        <begin position="181"/>
        <end position="187"/>
    </location>
</feature>
<feature type="helix" evidence="19">
    <location>
        <begin position="188"/>
        <end position="192"/>
    </location>
</feature>
<feature type="strand" evidence="19">
    <location>
        <begin position="199"/>
        <end position="203"/>
    </location>
</feature>
<feature type="helix" evidence="19">
    <location>
        <begin position="207"/>
        <end position="210"/>
    </location>
</feature>
<feature type="turn" evidence="18">
    <location>
        <begin position="213"/>
        <end position="216"/>
    </location>
</feature>
<feature type="strand" evidence="19">
    <location>
        <begin position="218"/>
        <end position="223"/>
    </location>
</feature>
<feature type="strand" evidence="19">
    <location>
        <begin position="234"/>
        <end position="241"/>
    </location>
</feature>
<feature type="strand" evidence="19">
    <location>
        <begin position="243"/>
        <end position="245"/>
    </location>
</feature>
<feature type="helix" evidence="19">
    <location>
        <begin position="247"/>
        <end position="255"/>
    </location>
</feature>
<feature type="strand" evidence="19">
    <location>
        <begin position="258"/>
        <end position="260"/>
    </location>
</feature>
<feature type="strand" evidence="19">
    <location>
        <begin position="285"/>
        <end position="288"/>
    </location>
</feature>
<protein>
    <recommendedName>
        <fullName evidence="16">Carbonic anhydrase 12</fullName>
        <ecNumber evidence="13">4.2.1.1</ecNumber>
    </recommendedName>
    <alternativeName>
        <fullName>Carbonate dehydratase XII</fullName>
    </alternativeName>
    <alternativeName>
        <fullName>Carbonic anhydrase XII</fullName>
        <shortName>CA-XII</shortName>
    </alternativeName>
    <alternativeName>
        <fullName>Tumor antigen HOM-RCC-3.1.3</fullName>
    </alternativeName>
</protein>
<proteinExistence type="evidence at protein level"/>
<keyword id="KW-0002">3D-structure</keyword>
<keyword id="KW-0025">Alternative splicing</keyword>
<keyword id="KW-1003">Cell membrane</keyword>
<keyword id="KW-0225">Disease variant</keyword>
<keyword id="KW-1015">Disulfide bond</keyword>
<keyword id="KW-0325">Glycoprotein</keyword>
<keyword id="KW-0456">Lyase</keyword>
<keyword id="KW-0472">Membrane</keyword>
<keyword id="KW-0479">Metal-binding</keyword>
<keyword id="KW-1267">Proteomics identification</keyword>
<keyword id="KW-1185">Reference proteome</keyword>
<keyword id="KW-0732">Signal</keyword>
<keyword id="KW-0812">Transmembrane</keyword>
<keyword id="KW-1133">Transmembrane helix</keyword>
<keyword id="KW-0862">Zinc</keyword>
<dbReference type="EC" id="4.2.1.1" evidence="13"/>
<dbReference type="EMBL" id="AF051882">
    <property type="protein sequence ID" value="AAC39789.1"/>
    <property type="molecule type" value="mRNA"/>
</dbReference>
<dbReference type="EMBL" id="AF037335">
    <property type="protein sequence ID" value="AAC63952.1"/>
    <property type="molecule type" value="mRNA"/>
</dbReference>
<dbReference type="EMBL" id="BT006656">
    <property type="protein sequence ID" value="AAP35302.1"/>
    <property type="molecule type" value="mRNA"/>
</dbReference>
<dbReference type="EMBL" id="AK315769">
    <property type="protein sequence ID" value="BAG38121.1"/>
    <property type="molecule type" value="mRNA"/>
</dbReference>
<dbReference type="EMBL" id="BC000278">
    <property type="protein sequence ID" value="AAH00278.1"/>
    <property type="molecule type" value="mRNA"/>
</dbReference>
<dbReference type="EMBL" id="BC011691">
    <property type="protein sequence ID" value="AAH11691.1"/>
    <property type="molecule type" value="mRNA"/>
</dbReference>
<dbReference type="EMBL" id="BC023981">
    <property type="protein sequence ID" value="AAH23981.1"/>
    <property type="molecule type" value="mRNA"/>
</dbReference>
<dbReference type="CCDS" id="CCDS10185.1">
    <molecule id="O43570-1"/>
</dbReference>
<dbReference type="CCDS" id="CCDS10186.1">
    <molecule id="O43570-2"/>
</dbReference>
<dbReference type="RefSeq" id="NP_001209.1">
    <molecule id="O43570-1"/>
    <property type="nucleotide sequence ID" value="NM_001218.5"/>
</dbReference>
<dbReference type="RefSeq" id="NP_996808.1">
    <molecule id="O43570-2"/>
    <property type="nucleotide sequence ID" value="NM_206925.3"/>
</dbReference>
<dbReference type="PDB" id="1JCZ">
    <property type="method" value="X-ray"/>
    <property type="resolution" value="1.55 A"/>
    <property type="chains" value="A/B=30-291"/>
</dbReference>
<dbReference type="PDB" id="1JD0">
    <property type="method" value="X-ray"/>
    <property type="resolution" value="1.50 A"/>
    <property type="chains" value="A/B=30-291"/>
</dbReference>
<dbReference type="PDB" id="4HT2">
    <property type="method" value="X-ray"/>
    <property type="resolution" value="1.45 A"/>
    <property type="chains" value="A/B/C/D=30-291"/>
</dbReference>
<dbReference type="PDB" id="4KP5">
    <property type="method" value="X-ray"/>
    <property type="resolution" value="1.45 A"/>
    <property type="chains" value="A/B/C/D=30-291"/>
</dbReference>
<dbReference type="PDB" id="4KP8">
    <property type="method" value="X-ray"/>
    <property type="resolution" value="1.80 A"/>
    <property type="chains" value="A/B/C/D=30-291"/>
</dbReference>
<dbReference type="PDB" id="4Q0L">
    <property type="method" value="X-ray"/>
    <property type="resolution" value="2.00 A"/>
    <property type="chains" value="A/B/C/D=30-291"/>
</dbReference>
<dbReference type="PDB" id="4QJ0">
    <property type="method" value="X-ray"/>
    <property type="resolution" value="1.55 A"/>
    <property type="chains" value="A/B/C/D=30-291"/>
</dbReference>
<dbReference type="PDB" id="4QJO">
    <property type="method" value="X-ray"/>
    <property type="resolution" value="1.80 A"/>
    <property type="chains" value="A/B/C/D=30-291"/>
</dbReference>
<dbReference type="PDB" id="4QJW">
    <property type="method" value="X-ray"/>
    <property type="resolution" value="1.55 A"/>
    <property type="chains" value="A/B/C/D=30-291"/>
</dbReference>
<dbReference type="PDB" id="4WW8">
    <property type="method" value="X-ray"/>
    <property type="resolution" value="1.42 A"/>
    <property type="chains" value="A/B/C/D=30-291"/>
</dbReference>
<dbReference type="PDB" id="5LL5">
    <property type="method" value="X-ray"/>
    <property type="resolution" value="1.42 A"/>
    <property type="chains" value="A/B/C/D=30-291"/>
</dbReference>
<dbReference type="PDB" id="5LL9">
    <property type="method" value="X-ray"/>
    <property type="resolution" value="1.45 A"/>
    <property type="chains" value="A/B/C/D=30-291"/>
</dbReference>
<dbReference type="PDB" id="5LLO">
    <property type="method" value="X-ray"/>
    <property type="resolution" value="1.60 A"/>
    <property type="chains" value="A/B/C/D=30-291"/>
</dbReference>
<dbReference type="PDB" id="5LLP">
    <property type="method" value="X-ray"/>
    <property type="resolution" value="1.48 A"/>
    <property type="chains" value="A/B/C/D=30-291"/>
</dbReference>
<dbReference type="PDB" id="5MSA">
    <property type="method" value="X-ray"/>
    <property type="resolution" value="1.20 A"/>
    <property type="chains" value="A/B/C/D=30-291"/>
</dbReference>
<dbReference type="PDB" id="5MSB">
    <property type="method" value="X-ray"/>
    <property type="resolution" value="1.30 A"/>
    <property type="chains" value="A/B/C/D=30-291"/>
</dbReference>
<dbReference type="PDB" id="6G5L">
    <property type="method" value="X-ray"/>
    <property type="resolution" value="1.21 A"/>
    <property type="chains" value="A/B/C/D=30-291"/>
</dbReference>
<dbReference type="PDB" id="6G7A">
    <property type="method" value="X-ray"/>
    <property type="resolution" value="1.42 A"/>
    <property type="chains" value="A/B/C/D=30-291"/>
</dbReference>
<dbReference type="PDB" id="6QN0">
    <property type="method" value="X-ray"/>
    <property type="resolution" value="1.89 A"/>
    <property type="chains" value="A/B/C/D=30-291"/>
</dbReference>
<dbReference type="PDB" id="6QNG">
    <property type="method" value="X-ray"/>
    <property type="resolution" value="1.67 A"/>
    <property type="chains" value="A/B/C/D=30-291"/>
</dbReference>
<dbReference type="PDB" id="6QNL">
    <property type="method" value="X-ray"/>
    <property type="resolution" value="1.53 A"/>
    <property type="chains" value="A/B/C/D=30-291"/>
</dbReference>
<dbReference type="PDB" id="6R6Y">
    <property type="method" value="X-ray"/>
    <property type="resolution" value="1.38 A"/>
    <property type="chains" value="A/B/C/D=30-291"/>
</dbReference>
<dbReference type="PDB" id="6R71">
    <property type="method" value="X-ray"/>
    <property type="resolution" value="2.00 A"/>
    <property type="chains" value="A/B=30-291"/>
</dbReference>
<dbReference type="PDB" id="6RPS">
    <property type="method" value="X-ray"/>
    <property type="resolution" value="2.79 A"/>
    <property type="chains" value="A/B=31-291"/>
</dbReference>
<dbReference type="PDB" id="6T5P">
    <property type="method" value="X-ray"/>
    <property type="resolution" value="1.50 A"/>
    <property type="chains" value="A/B/C/D=30-291"/>
</dbReference>
<dbReference type="PDB" id="6T5Q">
    <property type="method" value="X-ray"/>
    <property type="resolution" value="1.80 A"/>
    <property type="chains" value="A/B/C/D=30-291"/>
</dbReference>
<dbReference type="PDB" id="7PP9">
    <property type="method" value="X-ray"/>
    <property type="resolution" value="2.34 A"/>
    <property type="chains" value="A/B/C/D=30-291"/>
</dbReference>
<dbReference type="PDB" id="7PUU">
    <property type="method" value="X-ray"/>
    <property type="resolution" value="1.51 A"/>
    <property type="chains" value="A/B/C/D=30-291"/>
</dbReference>
<dbReference type="PDB" id="7PUV">
    <property type="method" value="X-ray"/>
    <property type="resolution" value="1.40 A"/>
    <property type="chains" value="A/B/C/D=30-291"/>
</dbReference>
<dbReference type="PDB" id="7PUW">
    <property type="method" value="X-ray"/>
    <property type="resolution" value="1.42 A"/>
    <property type="chains" value="A/B/C/D=30-291"/>
</dbReference>
<dbReference type="PDB" id="8CO3">
    <property type="method" value="X-ray"/>
    <property type="resolution" value="1.68 A"/>
    <property type="chains" value="A/B/C/D=30-291"/>
</dbReference>
<dbReference type="PDBsum" id="1JCZ"/>
<dbReference type="PDBsum" id="1JD0"/>
<dbReference type="PDBsum" id="4HT2"/>
<dbReference type="PDBsum" id="4KP5"/>
<dbReference type="PDBsum" id="4KP8"/>
<dbReference type="PDBsum" id="4Q0L"/>
<dbReference type="PDBsum" id="4QJ0"/>
<dbReference type="PDBsum" id="4QJO"/>
<dbReference type="PDBsum" id="4QJW"/>
<dbReference type="PDBsum" id="4WW8"/>
<dbReference type="PDBsum" id="5LL5"/>
<dbReference type="PDBsum" id="5LL9"/>
<dbReference type="PDBsum" id="5LLO"/>
<dbReference type="PDBsum" id="5LLP"/>
<dbReference type="PDBsum" id="5MSA"/>
<dbReference type="PDBsum" id="5MSB"/>
<dbReference type="PDBsum" id="6G5L"/>
<dbReference type="PDBsum" id="6G7A"/>
<dbReference type="PDBsum" id="6QN0"/>
<dbReference type="PDBsum" id="6QNG"/>
<dbReference type="PDBsum" id="6QNL"/>
<dbReference type="PDBsum" id="6R6Y"/>
<dbReference type="PDBsum" id="6R71"/>
<dbReference type="PDBsum" id="6RPS"/>
<dbReference type="PDBsum" id="6T5P"/>
<dbReference type="PDBsum" id="6T5Q"/>
<dbReference type="PDBsum" id="7PP9"/>
<dbReference type="PDBsum" id="7PUU"/>
<dbReference type="PDBsum" id="7PUV"/>
<dbReference type="PDBsum" id="7PUW"/>
<dbReference type="PDBsum" id="8CO3"/>
<dbReference type="SMR" id="O43570"/>
<dbReference type="BioGRID" id="107225">
    <property type="interactions" value="24"/>
</dbReference>
<dbReference type="CORUM" id="O43570"/>
<dbReference type="FunCoup" id="O43570">
    <property type="interactions" value="494"/>
</dbReference>
<dbReference type="IntAct" id="O43570">
    <property type="interactions" value="16"/>
</dbReference>
<dbReference type="MINT" id="O43570"/>
<dbReference type="STRING" id="9606.ENSP00000178638"/>
<dbReference type="BindingDB" id="O43570"/>
<dbReference type="ChEMBL" id="CHEMBL3242"/>
<dbReference type="DrugBank" id="DB02232">
    <property type="generic name" value="1,2-Dihydroxybenzene"/>
</dbReference>
<dbReference type="DrugBank" id="DB08782">
    <property type="generic name" value="4-(2-AMINOETHYL)BENZENESULFONAMIDE"/>
</dbReference>
<dbReference type="DrugBank" id="DB07050">
    <property type="generic name" value="5-[(phenylsulfonyl)amino]-1,3,4-thiadiazole-2-sulfonamide"/>
</dbReference>
<dbReference type="DrugBank" id="DB00819">
    <property type="generic name" value="Acetazolamide"/>
</dbReference>
<dbReference type="DrugBank" id="DB00562">
    <property type="generic name" value="Benzthiazide"/>
</dbReference>
<dbReference type="DrugBank" id="DB03854">
    <property type="generic name" value="Cadaverine"/>
</dbReference>
<dbReference type="DrugBank" id="DB14086">
    <property type="generic name" value="Cianidanol"/>
</dbReference>
<dbReference type="DrugBank" id="DB04665">
    <property type="generic name" value="Coumarin"/>
</dbReference>
<dbReference type="DrugBank" id="DB11672">
    <property type="generic name" value="Curcumin"/>
</dbReference>
<dbReference type="DrugBank" id="DB08846">
    <property type="generic name" value="Ellagic acid"/>
</dbReference>
<dbReference type="DrugBank" id="DB07767">
    <property type="generic name" value="Ferulic acid"/>
</dbReference>
<dbReference type="DrugBank" id="DB03260">
    <property type="generic name" value="Hexamethylene diamine"/>
</dbReference>
<dbReference type="DrugBank" id="DB00774">
    <property type="generic name" value="Hydroflumethiazide"/>
</dbReference>
<dbReference type="DrugBank" id="DB08165">
    <property type="generic name" value="indane-5-sulfonamide"/>
</dbReference>
<dbReference type="DrugBank" id="DB06795">
    <property type="generic name" value="Mafenide"/>
</dbReference>
<dbReference type="DrugBank" id="DB04066">
    <property type="generic name" value="p-Coumaric acid"/>
</dbReference>
<dbReference type="DrugBank" id="DB17299">
    <property type="generic name" value="p-Toluenesulfonamide"/>
</dbReference>
<dbReference type="DrugBank" id="DB03255">
    <property type="generic name" value="Phenol"/>
</dbReference>
<dbReference type="DrugBank" id="DB11085">
    <property type="generic name" value="Resorcinol"/>
</dbReference>
<dbReference type="DrugBank" id="DB12418">
    <property type="generic name" value="Saccharin"/>
</dbReference>
<dbReference type="DrugBank" id="DB00936">
    <property type="generic name" value="Salicylic acid"/>
</dbReference>
<dbReference type="DrugBank" id="DB00909">
    <property type="generic name" value="Zonisamide"/>
</dbReference>
<dbReference type="DrugCentral" id="O43570"/>
<dbReference type="GuidetoPHARMACOLOGY" id="2747"/>
<dbReference type="GlyConnect" id="1064">
    <property type="glycosylation" value="1 N-Linked glycan (1 site)"/>
</dbReference>
<dbReference type="GlyCosmos" id="O43570">
    <property type="glycosylation" value="3 sites, 1 glycan"/>
</dbReference>
<dbReference type="GlyGen" id="O43570">
    <property type="glycosylation" value="3 sites, 1 N-linked glycan (1 site)"/>
</dbReference>
<dbReference type="iPTMnet" id="O43570"/>
<dbReference type="PhosphoSitePlus" id="O43570"/>
<dbReference type="SwissPalm" id="O43570"/>
<dbReference type="BioMuta" id="CA12"/>
<dbReference type="jPOST" id="O43570"/>
<dbReference type="MassIVE" id="O43570"/>
<dbReference type="PaxDb" id="9606-ENSP00000178638"/>
<dbReference type="PeptideAtlas" id="O43570"/>
<dbReference type="ProteomicsDB" id="49059">
    <molecule id="O43570-1"/>
</dbReference>
<dbReference type="ProteomicsDB" id="49060">
    <molecule id="O43570-2"/>
</dbReference>
<dbReference type="ABCD" id="O43570">
    <property type="antibodies" value="2 sequenced antibodies"/>
</dbReference>
<dbReference type="Antibodypedia" id="2237">
    <property type="antibodies" value="553 antibodies from 33 providers"/>
</dbReference>
<dbReference type="DNASU" id="771"/>
<dbReference type="Ensembl" id="ENST00000178638.8">
    <molecule id="O43570-1"/>
    <property type="protein sequence ID" value="ENSP00000178638.3"/>
    <property type="gene ID" value="ENSG00000074410.14"/>
</dbReference>
<dbReference type="Ensembl" id="ENST00000344366.7">
    <molecule id="O43570-2"/>
    <property type="protein sequence ID" value="ENSP00000343088.3"/>
    <property type="gene ID" value="ENSG00000074410.14"/>
</dbReference>
<dbReference type="GeneID" id="771"/>
<dbReference type="KEGG" id="hsa:771"/>
<dbReference type="MANE-Select" id="ENST00000178638.8">
    <property type="protein sequence ID" value="ENSP00000178638.3"/>
    <property type="RefSeq nucleotide sequence ID" value="NM_001218.5"/>
    <property type="RefSeq protein sequence ID" value="NP_001209.1"/>
</dbReference>
<dbReference type="UCSC" id="uc002amc.4">
    <molecule id="O43570-1"/>
    <property type="organism name" value="human"/>
</dbReference>
<dbReference type="AGR" id="HGNC:1371"/>
<dbReference type="CTD" id="771"/>
<dbReference type="DisGeNET" id="771"/>
<dbReference type="GeneCards" id="CA12"/>
<dbReference type="HGNC" id="HGNC:1371">
    <property type="gene designation" value="CA12"/>
</dbReference>
<dbReference type="HPA" id="ENSG00000074410">
    <property type="expression patterns" value="Tissue enhanced (choroid plexus, kidney, skin)"/>
</dbReference>
<dbReference type="MalaCards" id="CA12"/>
<dbReference type="MIM" id="143860">
    <property type="type" value="phenotype"/>
</dbReference>
<dbReference type="MIM" id="603263">
    <property type="type" value="gene"/>
</dbReference>
<dbReference type="neXtProt" id="NX_O43570"/>
<dbReference type="OpenTargets" id="ENSG00000074410"/>
<dbReference type="Orphanet" id="542657">
    <property type="disease" value="Isolated hyperchlorhidrosis"/>
</dbReference>
<dbReference type="PharmGKB" id="PA25987"/>
<dbReference type="VEuPathDB" id="HostDB:ENSG00000074410"/>
<dbReference type="eggNOG" id="KOG0382">
    <property type="taxonomic scope" value="Eukaryota"/>
</dbReference>
<dbReference type="GeneTree" id="ENSGT00940000159282"/>
<dbReference type="HOGENOM" id="CLU_039326_1_2_1"/>
<dbReference type="InParanoid" id="O43570"/>
<dbReference type="OMA" id="LHPDMHI"/>
<dbReference type="OrthoDB" id="429145at2759"/>
<dbReference type="PAN-GO" id="O43570">
    <property type="GO annotations" value="3 GO annotations based on evolutionary models"/>
</dbReference>
<dbReference type="PhylomeDB" id="O43570"/>
<dbReference type="TreeFam" id="TF316425"/>
<dbReference type="BRENDA" id="4.2.1.1">
    <property type="organism ID" value="2681"/>
</dbReference>
<dbReference type="PathwayCommons" id="O43570"/>
<dbReference type="Reactome" id="R-HSA-1475029">
    <property type="pathway name" value="Reversible hydration of carbon dioxide"/>
</dbReference>
<dbReference type="SignaLink" id="O43570"/>
<dbReference type="BioGRID-ORCS" id="771">
    <property type="hits" value="15 hits in 1155 CRISPR screens"/>
</dbReference>
<dbReference type="ChiTaRS" id="CA12">
    <property type="organism name" value="human"/>
</dbReference>
<dbReference type="EvolutionaryTrace" id="O43570"/>
<dbReference type="GeneWiki" id="CA12"/>
<dbReference type="GenomeRNAi" id="771"/>
<dbReference type="Pharos" id="O43570">
    <property type="development level" value="Tclin"/>
</dbReference>
<dbReference type="PRO" id="PR:O43570"/>
<dbReference type="Proteomes" id="UP000005640">
    <property type="component" value="Chromosome 15"/>
</dbReference>
<dbReference type="RNAct" id="O43570">
    <property type="molecule type" value="protein"/>
</dbReference>
<dbReference type="Bgee" id="ENSG00000074410">
    <property type="expression patterns" value="Expressed in renal medulla and 183 other cell types or tissues"/>
</dbReference>
<dbReference type="ExpressionAtlas" id="O43570">
    <property type="expression patterns" value="baseline and differential"/>
</dbReference>
<dbReference type="GO" id="GO:0016324">
    <property type="term" value="C:apical plasma membrane"/>
    <property type="evidence" value="ECO:0007669"/>
    <property type="project" value="Ensembl"/>
</dbReference>
<dbReference type="GO" id="GO:0016323">
    <property type="term" value="C:basolateral plasma membrane"/>
    <property type="evidence" value="ECO:0007669"/>
    <property type="project" value="Ensembl"/>
</dbReference>
<dbReference type="GO" id="GO:0016020">
    <property type="term" value="C:membrane"/>
    <property type="evidence" value="ECO:0000304"/>
    <property type="project" value="ProtInc"/>
</dbReference>
<dbReference type="GO" id="GO:0005886">
    <property type="term" value="C:plasma membrane"/>
    <property type="evidence" value="ECO:0000318"/>
    <property type="project" value="GO_Central"/>
</dbReference>
<dbReference type="GO" id="GO:0004089">
    <property type="term" value="F:carbonate dehydratase activity"/>
    <property type="evidence" value="ECO:0000318"/>
    <property type="project" value="GO_Central"/>
</dbReference>
<dbReference type="GO" id="GO:0008270">
    <property type="term" value="F:zinc ion binding"/>
    <property type="evidence" value="ECO:0000304"/>
    <property type="project" value="ProtInc"/>
</dbReference>
<dbReference type="GO" id="GO:0055064">
    <property type="term" value="P:chloride ion homeostasis"/>
    <property type="evidence" value="ECO:0000315"/>
    <property type="project" value="UniProtKB"/>
</dbReference>
<dbReference type="GO" id="GO:0044849">
    <property type="term" value="P:estrous cycle"/>
    <property type="evidence" value="ECO:0007669"/>
    <property type="project" value="Ensembl"/>
</dbReference>
<dbReference type="CDD" id="cd03126">
    <property type="entry name" value="alpha_CA_XII_XIV"/>
    <property type="match status" value="1"/>
</dbReference>
<dbReference type="FunFam" id="3.10.200.10:FF:000003">
    <property type="entry name" value="Carbonic anhydrase 12"/>
    <property type="match status" value="1"/>
</dbReference>
<dbReference type="Gene3D" id="3.10.200.10">
    <property type="entry name" value="Alpha carbonic anhydrase"/>
    <property type="match status" value="1"/>
</dbReference>
<dbReference type="InterPro" id="IPR001148">
    <property type="entry name" value="CA_dom"/>
</dbReference>
<dbReference type="InterPro" id="IPR036398">
    <property type="entry name" value="CA_dom_sf"/>
</dbReference>
<dbReference type="InterPro" id="IPR023561">
    <property type="entry name" value="Carbonic_anhydrase_a-class"/>
</dbReference>
<dbReference type="InterPro" id="IPR018338">
    <property type="entry name" value="Carbonic_anhydrase_a-class_CS"/>
</dbReference>
<dbReference type="PANTHER" id="PTHR18952">
    <property type="entry name" value="CARBONIC ANHYDRASE"/>
    <property type="match status" value="1"/>
</dbReference>
<dbReference type="PANTHER" id="PTHR18952:SF19">
    <property type="entry name" value="CARBONIC ANHYDRASE 12"/>
    <property type="match status" value="1"/>
</dbReference>
<dbReference type="Pfam" id="PF00194">
    <property type="entry name" value="Carb_anhydrase"/>
    <property type="match status" value="1"/>
</dbReference>
<dbReference type="SMART" id="SM01057">
    <property type="entry name" value="Carb_anhydrase"/>
    <property type="match status" value="1"/>
</dbReference>
<dbReference type="SUPFAM" id="SSF51069">
    <property type="entry name" value="Carbonic anhydrase"/>
    <property type="match status" value="1"/>
</dbReference>
<dbReference type="PROSITE" id="PS00162">
    <property type="entry name" value="ALPHA_CA_1"/>
    <property type="match status" value="1"/>
</dbReference>
<dbReference type="PROSITE" id="PS51144">
    <property type="entry name" value="ALPHA_CA_2"/>
    <property type="match status" value="1"/>
</dbReference>
<sequence length="354" mass="39451">MPRRSLHAAAVLLLVILKEQPSSPAPVNGSKWTYFGPDGENSWSKKYPSCGGLLQSPIDLHSDILQYDASLTPLEFQGYNLSANKQFLLTNNGHSVKLNLPSDMHIQGLQSRYSATQLHLHWGNPNDPHGSEHTVSGQHFAAELHIVHYNSDLYPDASTASNKSEGLAVLAVLIEMGSFNPSYDKIFSHLQHVKYKGQEAFVPGFNIEELLPERTAEYYRYRGSLTTPPCNPTVLWTVFRNPVQISQEQLLALETALYCTHMDDPSPREMINNFRQVQKFDERLVYTSFSQVQVCTAAGLSLGIILSLALAGILGICIVVVVSIWLFRRKSIKKGDNKGVIYKPATKMETEAHA</sequence>
<name>CAH12_HUMAN</name>
<accession>O43570</accession>
<accession>B2RE24</accession>
<accession>Q53YE5</accession>
<accession>Q9BWG2</accession>